<accession>Q9UTM8</accession>
<protein>
    <recommendedName>
        <fullName>Succinate-semialdehyde dehydrogenase [NADP(+)] 2</fullName>
        <shortName>SSA dehydrogenase 2</shortName>
        <shortName>SSADH 2</shortName>
        <shortName>SSDH 2</shortName>
        <ecNumber evidence="2">1.2.1.16</ecNumber>
    </recommendedName>
</protein>
<evidence type="ECO:0000250" key="1"/>
<evidence type="ECO:0000250" key="2">
    <source>
        <dbReference type="UniProtKB" id="P38067"/>
    </source>
</evidence>
<evidence type="ECO:0000255" key="3">
    <source>
        <dbReference type="PROSITE-ProRule" id="PRU10007"/>
    </source>
</evidence>
<evidence type="ECO:0000255" key="4">
    <source>
        <dbReference type="PROSITE-ProRule" id="PRU10008"/>
    </source>
</evidence>
<evidence type="ECO:0000269" key="5">
    <source>
    </source>
</evidence>
<evidence type="ECO:0000305" key="6"/>
<evidence type="ECO:0000312" key="7">
    <source>
        <dbReference type="PomBase" id="SPAC139.05"/>
    </source>
</evidence>
<dbReference type="EC" id="1.2.1.16" evidence="2"/>
<dbReference type="EMBL" id="CU329670">
    <property type="protein sequence ID" value="CAB59619.1"/>
    <property type="molecule type" value="Genomic_DNA"/>
</dbReference>
<dbReference type="PIR" id="T37606">
    <property type="entry name" value="T37606"/>
</dbReference>
<dbReference type="RefSeq" id="NP_593172.1">
    <property type="nucleotide sequence ID" value="NM_001018569.2"/>
</dbReference>
<dbReference type="SMR" id="Q9UTM8"/>
<dbReference type="FunCoup" id="Q9UTM8">
    <property type="interactions" value="86"/>
</dbReference>
<dbReference type="STRING" id="284812.Q9UTM8"/>
<dbReference type="iPTMnet" id="Q9UTM8"/>
<dbReference type="PaxDb" id="4896-SPAC139.05.1"/>
<dbReference type="EnsemblFungi" id="SPAC139.05.1">
    <property type="protein sequence ID" value="SPAC139.05.1:pep"/>
    <property type="gene ID" value="SPAC139.05"/>
</dbReference>
<dbReference type="GeneID" id="2541647"/>
<dbReference type="KEGG" id="spo:2541647"/>
<dbReference type="PomBase" id="SPAC139.05">
    <property type="gene designation" value="ssd2"/>
</dbReference>
<dbReference type="VEuPathDB" id="FungiDB:SPAC139.05"/>
<dbReference type="eggNOG" id="KOG2451">
    <property type="taxonomic scope" value="Eukaryota"/>
</dbReference>
<dbReference type="HOGENOM" id="CLU_005391_5_1_1"/>
<dbReference type="InParanoid" id="Q9UTM8"/>
<dbReference type="OMA" id="EFAWERQ"/>
<dbReference type="PhylomeDB" id="Q9UTM8"/>
<dbReference type="UniPathway" id="UPA00733"/>
<dbReference type="PRO" id="PR:Q9UTM8"/>
<dbReference type="Proteomes" id="UP000002485">
    <property type="component" value="Chromosome I"/>
</dbReference>
<dbReference type="GO" id="GO:0005829">
    <property type="term" value="C:cytosol"/>
    <property type="evidence" value="ECO:0007005"/>
    <property type="project" value="PomBase"/>
</dbReference>
<dbReference type="GO" id="GO:0005739">
    <property type="term" value="C:mitochondrion"/>
    <property type="evidence" value="ECO:0000304"/>
    <property type="project" value="PomBase"/>
</dbReference>
<dbReference type="GO" id="GO:0004777">
    <property type="term" value="F:succinate-semialdehyde dehydrogenase (NAD+) activity"/>
    <property type="evidence" value="ECO:0000318"/>
    <property type="project" value="GO_Central"/>
</dbReference>
<dbReference type="GO" id="GO:0036243">
    <property type="term" value="F:succinate-semialdehyde dehydrogenase (NADP+) activity"/>
    <property type="evidence" value="ECO:0007669"/>
    <property type="project" value="RHEA"/>
</dbReference>
<dbReference type="GO" id="GO:0009450">
    <property type="term" value="P:gamma-aminobutyric acid catabolic process"/>
    <property type="evidence" value="ECO:0000266"/>
    <property type="project" value="PomBase"/>
</dbReference>
<dbReference type="CDD" id="cd07103">
    <property type="entry name" value="ALDH_F5_SSADH_GabD"/>
    <property type="match status" value="1"/>
</dbReference>
<dbReference type="FunFam" id="3.40.309.10:FF:000004">
    <property type="entry name" value="Succinate-semialdehyde dehydrogenase I"/>
    <property type="match status" value="1"/>
</dbReference>
<dbReference type="FunFam" id="3.40.605.10:FF:000005">
    <property type="entry name" value="Succinate-semialdehyde dehydrogenase I"/>
    <property type="match status" value="1"/>
</dbReference>
<dbReference type="Gene3D" id="3.40.605.10">
    <property type="entry name" value="Aldehyde Dehydrogenase, Chain A, domain 1"/>
    <property type="match status" value="1"/>
</dbReference>
<dbReference type="Gene3D" id="3.40.309.10">
    <property type="entry name" value="Aldehyde Dehydrogenase, Chain A, domain 2"/>
    <property type="match status" value="1"/>
</dbReference>
<dbReference type="InterPro" id="IPR016161">
    <property type="entry name" value="Ald_DH/histidinol_DH"/>
</dbReference>
<dbReference type="InterPro" id="IPR016163">
    <property type="entry name" value="Ald_DH_C"/>
</dbReference>
<dbReference type="InterPro" id="IPR016160">
    <property type="entry name" value="Ald_DH_CS_CYS"/>
</dbReference>
<dbReference type="InterPro" id="IPR029510">
    <property type="entry name" value="Ald_DH_CS_GLU"/>
</dbReference>
<dbReference type="InterPro" id="IPR016162">
    <property type="entry name" value="Ald_DH_N"/>
</dbReference>
<dbReference type="InterPro" id="IPR015590">
    <property type="entry name" value="Aldehyde_DH_dom"/>
</dbReference>
<dbReference type="InterPro" id="IPR050740">
    <property type="entry name" value="Aldehyde_DH_Superfamily"/>
</dbReference>
<dbReference type="InterPro" id="IPR010102">
    <property type="entry name" value="Succ_semiAld_DH"/>
</dbReference>
<dbReference type="NCBIfam" id="TIGR01780">
    <property type="entry name" value="SSADH"/>
    <property type="match status" value="1"/>
</dbReference>
<dbReference type="PANTHER" id="PTHR43353:SF12">
    <property type="entry name" value="SUCCINATE-SEMIALDEHYDE DEHYDROGENASE C139.05 [NADP(+)]-RELATED"/>
    <property type="match status" value="1"/>
</dbReference>
<dbReference type="PANTHER" id="PTHR43353">
    <property type="entry name" value="SUCCINATE-SEMIALDEHYDE DEHYDROGENASE, MITOCHONDRIAL"/>
    <property type="match status" value="1"/>
</dbReference>
<dbReference type="Pfam" id="PF00171">
    <property type="entry name" value="Aldedh"/>
    <property type="match status" value="1"/>
</dbReference>
<dbReference type="SUPFAM" id="SSF53720">
    <property type="entry name" value="ALDH-like"/>
    <property type="match status" value="1"/>
</dbReference>
<dbReference type="PROSITE" id="PS00070">
    <property type="entry name" value="ALDEHYDE_DEHYDR_CYS"/>
    <property type="match status" value="1"/>
</dbReference>
<dbReference type="PROSITE" id="PS00687">
    <property type="entry name" value="ALDEHYDE_DEHYDR_GLU"/>
    <property type="match status" value="1"/>
</dbReference>
<name>SSDH2_SCHPO</name>
<proteinExistence type="inferred from homology"/>
<keyword id="KW-0963">Cytoplasm</keyword>
<keyword id="KW-0521">NADP</keyword>
<keyword id="KW-0560">Oxidoreductase</keyword>
<keyword id="KW-1185">Reference proteome</keyword>
<feature type="chain" id="PRO_0000310352" description="Succinate-semialdehyde dehydrogenase [NADP(+)] 2">
    <location>
        <begin position="1"/>
        <end position="493"/>
    </location>
</feature>
<feature type="active site" evidence="3">
    <location>
        <position position="264"/>
    </location>
</feature>
<feature type="active site" description="Nucleophile" evidence="4">
    <location>
        <position position="298"/>
    </location>
</feature>
<feature type="binding site" evidence="1">
    <location>
        <begin position="242"/>
        <end position="247"/>
    </location>
    <ligand>
        <name>NAD(+)</name>
        <dbReference type="ChEBI" id="CHEBI:57540"/>
    </ligand>
</feature>
<gene>
    <name type="primary">ssd2</name>
    <name evidence="7" type="ORF">SPAC139.05</name>
</gene>
<sequence>MAPQFKRPELFGFDKSHAQSFVQGKWISSPNNKTFEVDNPATGEIIGKVADVSVEETKKAISAANEAFKTYKNFTHVQRSQLLERWAELIMENKDDLVKMLTLENGKPLSQAEMEVTTCSGYLKWYAAEAVRTFGDVAPSSLQSQNFLISIKQPVGVSALITPWNFPAAMIARKGGAALAAGCTAIFLPAFRTPYVCLGLVRLAQEAGFPDGVLNVITSSDASAHGKELTTNPIVRKVSFTGSTNVGKILMGQSASTIKKVSMELGGNAPFIVFPDFPIDQAVESFCTIKFNSCGQVCVCPNRVYVHKNVYDEFVSKLTEKVKTIKVGDGFDSSSAVGPLISQDGCKKVSKHIEDAVSKGAKITVGGKEISSSKGYFFEPTVLSGVTQDMLVASEETFGPLASVFKFDDTEEVIEWANDSDVGLAGYVFTNNLSTMIHVAKELEVGLVGANIEMVDEPFISFGGIKQSGFGKEAGRLGVQEFMVVKEINLKTL</sequence>
<organism>
    <name type="scientific">Schizosaccharomyces pombe (strain 972 / ATCC 24843)</name>
    <name type="common">Fission yeast</name>
    <dbReference type="NCBI Taxonomy" id="284812"/>
    <lineage>
        <taxon>Eukaryota</taxon>
        <taxon>Fungi</taxon>
        <taxon>Dikarya</taxon>
        <taxon>Ascomycota</taxon>
        <taxon>Taphrinomycotina</taxon>
        <taxon>Schizosaccharomycetes</taxon>
        <taxon>Schizosaccharomycetales</taxon>
        <taxon>Schizosaccharomycetaceae</taxon>
        <taxon>Schizosaccharomyces</taxon>
    </lineage>
</organism>
<comment type="function">
    <text evidence="2">Catalyzes the oxidation of succinate semialdehyde to succinate. Can utilize both NAD(+) or NADP(+) as a coenzyme. Functions in the GABA shunt, which allows to bypass 2 reactions in the TCA cycle by removing alpha-ketoglutarate from the cycle and feeding succinate and NADH back into the cycle.</text>
</comment>
<comment type="catalytic activity">
    <reaction evidence="2">
        <text>succinate semialdehyde + NAD(+) + H2O = succinate + NADH + 2 H(+)</text>
        <dbReference type="Rhea" id="RHEA:13217"/>
        <dbReference type="ChEBI" id="CHEBI:15377"/>
        <dbReference type="ChEBI" id="CHEBI:15378"/>
        <dbReference type="ChEBI" id="CHEBI:30031"/>
        <dbReference type="ChEBI" id="CHEBI:57540"/>
        <dbReference type="ChEBI" id="CHEBI:57706"/>
        <dbReference type="ChEBI" id="CHEBI:57945"/>
        <dbReference type="EC" id="1.2.1.16"/>
    </reaction>
</comment>
<comment type="catalytic activity">
    <reaction evidence="2">
        <text>succinate semialdehyde + NADP(+) + H2O = succinate + NADPH + 2 H(+)</text>
        <dbReference type="Rhea" id="RHEA:13213"/>
        <dbReference type="ChEBI" id="CHEBI:15377"/>
        <dbReference type="ChEBI" id="CHEBI:15378"/>
        <dbReference type="ChEBI" id="CHEBI:30031"/>
        <dbReference type="ChEBI" id="CHEBI:57706"/>
        <dbReference type="ChEBI" id="CHEBI:57783"/>
        <dbReference type="ChEBI" id="CHEBI:58349"/>
        <dbReference type="EC" id="1.2.1.16"/>
    </reaction>
</comment>
<comment type="pathway">
    <text evidence="2">Amino-acid degradation; 4-aminobutanoate degradation.</text>
</comment>
<comment type="subunit">
    <text evidence="2">Homotetramer.</text>
</comment>
<comment type="subcellular location">
    <subcellularLocation>
        <location evidence="5">Cytoplasm</location>
    </subcellularLocation>
</comment>
<comment type="similarity">
    <text evidence="6">Belongs to the aldehyde dehydrogenase family.</text>
</comment>
<reference key="1">
    <citation type="journal article" date="2002" name="Nature">
        <title>The genome sequence of Schizosaccharomyces pombe.</title>
        <authorList>
            <person name="Wood V."/>
            <person name="Gwilliam R."/>
            <person name="Rajandream M.A."/>
            <person name="Lyne M.H."/>
            <person name="Lyne R."/>
            <person name="Stewart A."/>
            <person name="Sgouros J.G."/>
            <person name="Peat N."/>
            <person name="Hayles J."/>
            <person name="Baker S.G."/>
            <person name="Basham D."/>
            <person name="Bowman S."/>
            <person name="Brooks K."/>
            <person name="Brown D."/>
            <person name="Brown S."/>
            <person name="Chillingworth T."/>
            <person name="Churcher C.M."/>
            <person name="Collins M."/>
            <person name="Connor R."/>
            <person name="Cronin A."/>
            <person name="Davis P."/>
            <person name="Feltwell T."/>
            <person name="Fraser A."/>
            <person name="Gentles S."/>
            <person name="Goble A."/>
            <person name="Hamlin N."/>
            <person name="Harris D.E."/>
            <person name="Hidalgo J."/>
            <person name="Hodgson G."/>
            <person name="Holroyd S."/>
            <person name="Hornsby T."/>
            <person name="Howarth S."/>
            <person name="Huckle E.J."/>
            <person name="Hunt S."/>
            <person name="Jagels K."/>
            <person name="James K.D."/>
            <person name="Jones L."/>
            <person name="Jones M."/>
            <person name="Leather S."/>
            <person name="McDonald S."/>
            <person name="McLean J."/>
            <person name="Mooney P."/>
            <person name="Moule S."/>
            <person name="Mungall K.L."/>
            <person name="Murphy L.D."/>
            <person name="Niblett D."/>
            <person name="Odell C."/>
            <person name="Oliver K."/>
            <person name="O'Neil S."/>
            <person name="Pearson D."/>
            <person name="Quail M.A."/>
            <person name="Rabbinowitsch E."/>
            <person name="Rutherford K.M."/>
            <person name="Rutter S."/>
            <person name="Saunders D."/>
            <person name="Seeger K."/>
            <person name="Sharp S."/>
            <person name="Skelton J."/>
            <person name="Simmonds M.N."/>
            <person name="Squares R."/>
            <person name="Squares S."/>
            <person name="Stevens K."/>
            <person name="Taylor K."/>
            <person name="Taylor R.G."/>
            <person name="Tivey A."/>
            <person name="Walsh S.V."/>
            <person name="Warren T."/>
            <person name="Whitehead S."/>
            <person name="Woodward J.R."/>
            <person name="Volckaert G."/>
            <person name="Aert R."/>
            <person name="Robben J."/>
            <person name="Grymonprez B."/>
            <person name="Weltjens I."/>
            <person name="Vanstreels E."/>
            <person name="Rieger M."/>
            <person name="Schaefer M."/>
            <person name="Mueller-Auer S."/>
            <person name="Gabel C."/>
            <person name="Fuchs M."/>
            <person name="Duesterhoeft A."/>
            <person name="Fritzc C."/>
            <person name="Holzer E."/>
            <person name="Moestl D."/>
            <person name="Hilbert H."/>
            <person name="Borzym K."/>
            <person name="Langer I."/>
            <person name="Beck A."/>
            <person name="Lehrach H."/>
            <person name="Reinhardt R."/>
            <person name="Pohl T.M."/>
            <person name="Eger P."/>
            <person name="Zimmermann W."/>
            <person name="Wedler H."/>
            <person name="Wambutt R."/>
            <person name="Purnelle B."/>
            <person name="Goffeau A."/>
            <person name="Cadieu E."/>
            <person name="Dreano S."/>
            <person name="Gloux S."/>
            <person name="Lelaure V."/>
            <person name="Mottier S."/>
            <person name="Galibert F."/>
            <person name="Aves S.J."/>
            <person name="Xiang Z."/>
            <person name="Hunt C."/>
            <person name="Moore K."/>
            <person name="Hurst S.M."/>
            <person name="Lucas M."/>
            <person name="Rochet M."/>
            <person name="Gaillardin C."/>
            <person name="Tallada V.A."/>
            <person name="Garzon A."/>
            <person name="Thode G."/>
            <person name="Daga R.R."/>
            <person name="Cruzado L."/>
            <person name="Jimenez J."/>
            <person name="Sanchez M."/>
            <person name="del Rey F."/>
            <person name="Benito J."/>
            <person name="Dominguez A."/>
            <person name="Revuelta J.L."/>
            <person name="Moreno S."/>
            <person name="Armstrong J."/>
            <person name="Forsburg S.L."/>
            <person name="Cerutti L."/>
            <person name="Lowe T."/>
            <person name="McCombie W.R."/>
            <person name="Paulsen I."/>
            <person name="Potashkin J."/>
            <person name="Shpakovski G.V."/>
            <person name="Ussery D."/>
            <person name="Barrell B.G."/>
            <person name="Nurse P."/>
        </authorList>
    </citation>
    <scope>NUCLEOTIDE SEQUENCE [LARGE SCALE GENOMIC DNA]</scope>
    <source>
        <strain>972 / ATCC 24843</strain>
    </source>
</reference>
<reference key="2">
    <citation type="journal article" date="2006" name="Nat. Biotechnol.">
        <title>ORFeome cloning and global analysis of protein localization in the fission yeast Schizosaccharomyces pombe.</title>
        <authorList>
            <person name="Matsuyama A."/>
            <person name="Arai R."/>
            <person name="Yashiroda Y."/>
            <person name="Shirai A."/>
            <person name="Kamata A."/>
            <person name="Sekido S."/>
            <person name="Kobayashi Y."/>
            <person name="Hashimoto A."/>
            <person name="Hamamoto M."/>
            <person name="Hiraoka Y."/>
            <person name="Horinouchi S."/>
            <person name="Yoshida M."/>
        </authorList>
    </citation>
    <scope>SUBCELLULAR LOCATION [LARGE SCALE ANALYSIS]</scope>
</reference>